<gene>
    <name evidence="1" type="primary">rplC</name>
    <name type="ordered locus">ETA_31640</name>
</gene>
<reference key="1">
    <citation type="journal article" date="2008" name="Environ. Microbiol.">
        <title>The genome of Erwinia tasmaniensis strain Et1/99, a non-pathogenic bacterium in the genus Erwinia.</title>
        <authorList>
            <person name="Kube M."/>
            <person name="Migdoll A.M."/>
            <person name="Mueller I."/>
            <person name="Kuhl H."/>
            <person name="Beck A."/>
            <person name="Reinhardt R."/>
            <person name="Geider K."/>
        </authorList>
    </citation>
    <scope>NUCLEOTIDE SEQUENCE [LARGE SCALE GENOMIC DNA]</scope>
    <source>
        <strain>DSM 17950 / CFBP 7177 / CIP 109463 / NCPPB 4357 / Et1/99</strain>
    </source>
</reference>
<feature type="chain" id="PRO_1000141867" description="Large ribosomal subunit protein uL3">
    <location>
        <begin position="1"/>
        <end position="209"/>
    </location>
</feature>
<feature type="region of interest" description="Disordered" evidence="2">
    <location>
        <begin position="132"/>
        <end position="153"/>
    </location>
</feature>
<feature type="modified residue" description="N5-methylglutamine" evidence="1">
    <location>
        <position position="150"/>
    </location>
</feature>
<sequence>MIGLVGKKVGMTRIFTEDGVSIPVTVIEIEANRVTQVKGLENDGYTAIQVTTGAKKASRVTKPAAGHFAKAGVEAGRGLWEFRTAEGAEFTVGQSINVDIFADVKKVDVTGTSKGKGFAGTVKRWNFRTQDATHGNSLSHRVPGSIGQNQTPGKVFKGKKMAGQLGNERVTVQSLDVVRVDAERNLLLVKGAVPGATGSDLIVKPAVKA</sequence>
<organism>
    <name type="scientific">Erwinia tasmaniensis (strain DSM 17950 / CFBP 7177 / CIP 109463 / NCPPB 4357 / Et1/99)</name>
    <dbReference type="NCBI Taxonomy" id="465817"/>
    <lineage>
        <taxon>Bacteria</taxon>
        <taxon>Pseudomonadati</taxon>
        <taxon>Pseudomonadota</taxon>
        <taxon>Gammaproteobacteria</taxon>
        <taxon>Enterobacterales</taxon>
        <taxon>Erwiniaceae</taxon>
        <taxon>Erwinia</taxon>
    </lineage>
</organism>
<proteinExistence type="inferred from homology"/>
<evidence type="ECO:0000255" key="1">
    <source>
        <dbReference type="HAMAP-Rule" id="MF_01325"/>
    </source>
</evidence>
<evidence type="ECO:0000256" key="2">
    <source>
        <dbReference type="SAM" id="MobiDB-lite"/>
    </source>
</evidence>
<evidence type="ECO:0000305" key="3"/>
<accession>B2VK65</accession>
<keyword id="KW-0488">Methylation</keyword>
<keyword id="KW-1185">Reference proteome</keyword>
<keyword id="KW-0687">Ribonucleoprotein</keyword>
<keyword id="KW-0689">Ribosomal protein</keyword>
<keyword id="KW-0694">RNA-binding</keyword>
<keyword id="KW-0699">rRNA-binding</keyword>
<comment type="function">
    <text evidence="1">One of the primary rRNA binding proteins, it binds directly near the 3'-end of the 23S rRNA, where it nucleates assembly of the 50S subunit.</text>
</comment>
<comment type="subunit">
    <text evidence="1">Part of the 50S ribosomal subunit. Forms a cluster with proteins L14 and L19.</text>
</comment>
<comment type="PTM">
    <text evidence="1">Methylated by PrmB.</text>
</comment>
<comment type="similarity">
    <text evidence="1">Belongs to the universal ribosomal protein uL3 family.</text>
</comment>
<name>RL3_ERWT9</name>
<dbReference type="EMBL" id="CU468135">
    <property type="protein sequence ID" value="CAO98210.1"/>
    <property type="molecule type" value="Genomic_DNA"/>
</dbReference>
<dbReference type="RefSeq" id="WP_012442845.1">
    <property type="nucleotide sequence ID" value="NC_010694.1"/>
</dbReference>
<dbReference type="SMR" id="B2VK65"/>
<dbReference type="STRING" id="465817.ETA_31640"/>
<dbReference type="KEGG" id="eta:ETA_31640"/>
<dbReference type="eggNOG" id="COG0087">
    <property type="taxonomic scope" value="Bacteria"/>
</dbReference>
<dbReference type="HOGENOM" id="CLU_044142_4_1_6"/>
<dbReference type="OrthoDB" id="9806135at2"/>
<dbReference type="Proteomes" id="UP000001726">
    <property type="component" value="Chromosome"/>
</dbReference>
<dbReference type="GO" id="GO:0022625">
    <property type="term" value="C:cytosolic large ribosomal subunit"/>
    <property type="evidence" value="ECO:0007669"/>
    <property type="project" value="TreeGrafter"/>
</dbReference>
<dbReference type="GO" id="GO:0019843">
    <property type="term" value="F:rRNA binding"/>
    <property type="evidence" value="ECO:0007669"/>
    <property type="project" value="UniProtKB-UniRule"/>
</dbReference>
<dbReference type="GO" id="GO:0003735">
    <property type="term" value="F:structural constituent of ribosome"/>
    <property type="evidence" value="ECO:0007669"/>
    <property type="project" value="InterPro"/>
</dbReference>
<dbReference type="GO" id="GO:0006412">
    <property type="term" value="P:translation"/>
    <property type="evidence" value="ECO:0007669"/>
    <property type="project" value="UniProtKB-UniRule"/>
</dbReference>
<dbReference type="FunFam" id="2.40.30.10:FF:000004">
    <property type="entry name" value="50S ribosomal protein L3"/>
    <property type="match status" value="1"/>
</dbReference>
<dbReference type="FunFam" id="3.30.160.810:FF:000001">
    <property type="entry name" value="50S ribosomal protein L3"/>
    <property type="match status" value="1"/>
</dbReference>
<dbReference type="Gene3D" id="3.30.160.810">
    <property type="match status" value="1"/>
</dbReference>
<dbReference type="Gene3D" id="2.40.30.10">
    <property type="entry name" value="Translation factors"/>
    <property type="match status" value="1"/>
</dbReference>
<dbReference type="HAMAP" id="MF_01325_B">
    <property type="entry name" value="Ribosomal_uL3_B"/>
    <property type="match status" value="1"/>
</dbReference>
<dbReference type="InterPro" id="IPR000597">
    <property type="entry name" value="Ribosomal_uL3"/>
</dbReference>
<dbReference type="InterPro" id="IPR019927">
    <property type="entry name" value="Ribosomal_uL3_bac/org-type"/>
</dbReference>
<dbReference type="InterPro" id="IPR019926">
    <property type="entry name" value="Ribosomal_uL3_CS"/>
</dbReference>
<dbReference type="InterPro" id="IPR009000">
    <property type="entry name" value="Transl_B-barrel_sf"/>
</dbReference>
<dbReference type="NCBIfam" id="TIGR03625">
    <property type="entry name" value="L3_bact"/>
    <property type="match status" value="1"/>
</dbReference>
<dbReference type="PANTHER" id="PTHR11229">
    <property type="entry name" value="50S RIBOSOMAL PROTEIN L3"/>
    <property type="match status" value="1"/>
</dbReference>
<dbReference type="PANTHER" id="PTHR11229:SF16">
    <property type="entry name" value="LARGE RIBOSOMAL SUBUNIT PROTEIN UL3C"/>
    <property type="match status" value="1"/>
</dbReference>
<dbReference type="Pfam" id="PF00297">
    <property type="entry name" value="Ribosomal_L3"/>
    <property type="match status" value="1"/>
</dbReference>
<dbReference type="SUPFAM" id="SSF50447">
    <property type="entry name" value="Translation proteins"/>
    <property type="match status" value="1"/>
</dbReference>
<dbReference type="PROSITE" id="PS00474">
    <property type="entry name" value="RIBOSOMAL_L3"/>
    <property type="match status" value="1"/>
</dbReference>
<protein>
    <recommendedName>
        <fullName evidence="1">Large ribosomal subunit protein uL3</fullName>
    </recommendedName>
    <alternativeName>
        <fullName evidence="3">50S ribosomal protein L3</fullName>
    </alternativeName>
</protein>